<name>SYL_SHEB8</name>
<accession>A6WRJ9</accession>
<proteinExistence type="inferred from homology"/>
<reference key="1">
    <citation type="submission" date="2007-07" db="EMBL/GenBank/DDBJ databases">
        <title>Complete sequence of chromosome of Shewanella baltica OS185.</title>
        <authorList>
            <consortium name="US DOE Joint Genome Institute"/>
            <person name="Copeland A."/>
            <person name="Lucas S."/>
            <person name="Lapidus A."/>
            <person name="Barry K."/>
            <person name="Glavina del Rio T."/>
            <person name="Dalin E."/>
            <person name="Tice H."/>
            <person name="Pitluck S."/>
            <person name="Sims D."/>
            <person name="Brettin T."/>
            <person name="Bruce D."/>
            <person name="Detter J.C."/>
            <person name="Han C."/>
            <person name="Schmutz J."/>
            <person name="Larimer F."/>
            <person name="Land M."/>
            <person name="Hauser L."/>
            <person name="Kyrpides N."/>
            <person name="Mikhailova N."/>
            <person name="Brettar I."/>
            <person name="Rodrigues J."/>
            <person name="Konstantinidis K."/>
            <person name="Tiedje J."/>
            <person name="Richardson P."/>
        </authorList>
    </citation>
    <scope>NUCLEOTIDE SEQUENCE [LARGE SCALE GENOMIC DNA]</scope>
    <source>
        <strain>OS185</strain>
    </source>
</reference>
<keyword id="KW-0030">Aminoacyl-tRNA synthetase</keyword>
<keyword id="KW-0067">ATP-binding</keyword>
<keyword id="KW-0963">Cytoplasm</keyword>
<keyword id="KW-0436">Ligase</keyword>
<keyword id="KW-0547">Nucleotide-binding</keyword>
<keyword id="KW-0648">Protein biosynthesis</keyword>
<evidence type="ECO:0000255" key="1">
    <source>
        <dbReference type="HAMAP-Rule" id="MF_00049"/>
    </source>
</evidence>
<evidence type="ECO:0000305" key="2"/>
<gene>
    <name evidence="1" type="primary">leuS</name>
    <name type="ordered locus">Shew185_3311</name>
</gene>
<feature type="chain" id="PRO_0000334814" description="Leucine--tRNA ligase">
    <location>
        <begin position="1"/>
        <end position="859"/>
    </location>
</feature>
<feature type="short sequence motif" description="'HIGH' region">
    <location>
        <begin position="42"/>
        <end position="52"/>
    </location>
</feature>
<feature type="short sequence motif" description="'KMSKS' region">
    <location>
        <begin position="618"/>
        <end position="622"/>
    </location>
</feature>
<feature type="binding site" evidence="1">
    <location>
        <position position="621"/>
    </location>
    <ligand>
        <name>ATP</name>
        <dbReference type="ChEBI" id="CHEBI:30616"/>
    </ligand>
</feature>
<sequence>MQEQYNPSEIEALVQKHWHDNKTFEVTEDANKEKFYCLSMFPYPSGRLHMGHVRNYTIGDVVARFQRLQGKNVLQPIGWDSFGLPAENAAINNKTAPAPWTYENIEYMKNQLKLLGFGYDWSREIATCTPEYYRWEQWFFTKLYEKGLVYKKTASVNWCPNDETVLANEQVQDGCCWRCDTPVEQKEIPQWFIKITAYAEELLNDIDTLDGWPEQVKTMQRNWIGRSEGVEMTFGVAGHDKSFDIYTTRPDTLMGVTYVAIAAGHPLAEIAAQTNPELAAFIDECKNSTTSEAELATMEKRGVATGLFAIHPITGKQVPIWAANFVLMNYGTGAVMSVPGHDQRDFEFAKKYGLAIEAVIKPVDGDVDISEAAYTEKGVLFNSGEFDGLDFEAGFNAIANKLVAEGKGKRQVNYRLRDWGVSRQRYWGAPIPMVTLADGTVIPTPADQLPVLLPEDVVMDGIQSPIKADKEWAKTQVNGQDALRETDTFDTFMESSWYYARYCSPHADEMLDPAKANYWLPVDQYIGGIEHACMHLLYFRFFHKLLRDAGLVNSNEPAKQLLTQGMVLADAFYYINEKGARVWVSPLDVATTEKDDKGRITKAIDKDGNELVYTGMSKMSKSKNNGIDPQVMVEKYGADTVRLFMMFASPPELTLEWQESGVEGAHRFIKRLWKLANEHVNQANSEALDVSTLTSDQKALRREVHKTIAKVTDDIGRRQMFNTAVAAVMELMNHLQKAPQTTGQDRAIIGEALSAIVRLLYPIIPHVSFNLWNELGNASNIEDSQWPVVDEAALVEDSKLIVVQVNGKVRAKITVAADADKESVEALGMSDEHVIKYLDGLTVRKVIYVPGKLLSIVAN</sequence>
<protein>
    <recommendedName>
        <fullName evidence="1">Leucine--tRNA ligase</fullName>
        <ecNumber evidence="1">6.1.1.4</ecNumber>
    </recommendedName>
    <alternativeName>
        <fullName evidence="1">Leucyl-tRNA synthetase</fullName>
        <shortName evidence="1">LeuRS</shortName>
    </alternativeName>
</protein>
<dbReference type="EC" id="6.1.1.4" evidence="1"/>
<dbReference type="EMBL" id="CP000753">
    <property type="protein sequence ID" value="ABS09438.1"/>
    <property type="status" value="ALT_INIT"/>
    <property type="molecule type" value="Genomic_DNA"/>
</dbReference>
<dbReference type="RefSeq" id="WP_041411254.1">
    <property type="nucleotide sequence ID" value="NC_009665.1"/>
</dbReference>
<dbReference type="SMR" id="A6WRJ9"/>
<dbReference type="KEGG" id="sbm:Shew185_3311"/>
<dbReference type="HOGENOM" id="CLU_004427_0_0_6"/>
<dbReference type="GO" id="GO:0005829">
    <property type="term" value="C:cytosol"/>
    <property type="evidence" value="ECO:0007669"/>
    <property type="project" value="TreeGrafter"/>
</dbReference>
<dbReference type="GO" id="GO:0002161">
    <property type="term" value="F:aminoacyl-tRNA deacylase activity"/>
    <property type="evidence" value="ECO:0007669"/>
    <property type="project" value="InterPro"/>
</dbReference>
<dbReference type="GO" id="GO:0005524">
    <property type="term" value="F:ATP binding"/>
    <property type="evidence" value="ECO:0007669"/>
    <property type="project" value="UniProtKB-UniRule"/>
</dbReference>
<dbReference type="GO" id="GO:0004823">
    <property type="term" value="F:leucine-tRNA ligase activity"/>
    <property type="evidence" value="ECO:0007669"/>
    <property type="project" value="UniProtKB-UniRule"/>
</dbReference>
<dbReference type="GO" id="GO:0006429">
    <property type="term" value="P:leucyl-tRNA aminoacylation"/>
    <property type="evidence" value="ECO:0007669"/>
    <property type="project" value="UniProtKB-UniRule"/>
</dbReference>
<dbReference type="CDD" id="cd07958">
    <property type="entry name" value="Anticodon_Ia_Leu_BEm"/>
    <property type="match status" value="1"/>
</dbReference>
<dbReference type="CDD" id="cd00812">
    <property type="entry name" value="LeuRS_core"/>
    <property type="match status" value="1"/>
</dbReference>
<dbReference type="FunFam" id="1.10.730.10:FF:000003">
    <property type="entry name" value="Leucine--tRNA ligase"/>
    <property type="match status" value="1"/>
</dbReference>
<dbReference type="FunFam" id="2.20.28.290:FF:000001">
    <property type="entry name" value="Leucine--tRNA ligase"/>
    <property type="match status" value="1"/>
</dbReference>
<dbReference type="FunFam" id="3.10.20.590:FF:000001">
    <property type="entry name" value="Leucine--tRNA ligase"/>
    <property type="match status" value="1"/>
</dbReference>
<dbReference type="FunFam" id="3.40.50.620:FF:000003">
    <property type="entry name" value="Leucine--tRNA ligase"/>
    <property type="match status" value="1"/>
</dbReference>
<dbReference type="FunFam" id="3.40.50.620:FF:000124">
    <property type="entry name" value="Leucine--tRNA ligase"/>
    <property type="match status" value="1"/>
</dbReference>
<dbReference type="FunFam" id="3.90.740.10:FF:000012">
    <property type="entry name" value="Leucine--tRNA ligase"/>
    <property type="match status" value="1"/>
</dbReference>
<dbReference type="Gene3D" id="2.20.28.290">
    <property type="match status" value="1"/>
</dbReference>
<dbReference type="Gene3D" id="3.10.20.590">
    <property type="match status" value="1"/>
</dbReference>
<dbReference type="Gene3D" id="3.40.50.620">
    <property type="entry name" value="HUPs"/>
    <property type="match status" value="2"/>
</dbReference>
<dbReference type="Gene3D" id="1.10.730.10">
    <property type="entry name" value="Isoleucyl-tRNA Synthetase, Domain 1"/>
    <property type="match status" value="2"/>
</dbReference>
<dbReference type="HAMAP" id="MF_00049_B">
    <property type="entry name" value="Leu_tRNA_synth_B"/>
    <property type="match status" value="1"/>
</dbReference>
<dbReference type="InterPro" id="IPR001412">
    <property type="entry name" value="aa-tRNA-synth_I_CS"/>
</dbReference>
<dbReference type="InterPro" id="IPR002300">
    <property type="entry name" value="aa-tRNA-synth_Ia"/>
</dbReference>
<dbReference type="InterPro" id="IPR002302">
    <property type="entry name" value="Leu-tRNA-ligase"/>
</dbReference>
<dbReference type="InterPro" id="IPR025709">
    <property type="entry name" value="Leu_tRNA-synth_edit"/>
</dbReference>
<dbReference type="InterPro" id="IPR013155">
    <property type="entry name" value="M/V/L/I-tRNA-synth_anticd-bd"/>
</dbReference>
<dbReference type="InterPro" id="IPR015413">
    <property type="entry name" value="Methionyl/Leucyl_tRNA_Synth"/>
</dbReference>
<dbReference type="InterPro" id="IPR014729">
    <property type="entry name" value="Rossmann-like_a/b/a_fold"/>
</dbReference>
<dbReference type="InterPro" id="IPR009080">
    <property type="entry name" value="tRNAsynth_Ia_anticodon-bd"/>
</dbReference>
<dbReference type="InterPro" id="IPR009008">
    <property type="entry name" value="Val/Leu/Ile-tRNA-synth_edit"/>
</dbReference>
<dbReference type="NCBIfam" id="TIGR00396">
    <property type="entry name" value="leuS_bact"/>
    <property type="match status" value="1"/>
</dbReference>
<dbReference type="PANTHER" id="PTHR43740:SF2">
    <property type="entry name" value="LEUCINE--TRNA LIGASE, MITOCHONDRIAL"/>
    <property type="match status" value="1"/>
</dbReference>
<dbReference type="PANTHER" id="PTHR43740">
    <property type="entry name" value="LEUCYL-TRNA SYNTHETASE"/>
    <property type="match status" value="1"/>
</dbReference>
<dbReference type="Pfam" id="PF08264">
    <property type="entry name" value="Anticodon_1"/>
    <property type="match status" value="1"/>
</dbReference>
<dbReference type="Pfam" id="PF00133">
    <property type="entry name" value="tRNA-synt_1"/>
    <property type="match status" value="2"/>
</dbReference>
<dbReference type="Pfam" id="PF13603">
    <property type="entry name" value="tRNA-synt_1_2"/>
    <property type="match status" value="1"/>
</dbReference>
<dbReference type="Pfam" id="PF09334">
    <property type="entry name" value="tRNA-synt_1g"/>
    <property type="match status" value="1"/>
</dbReference>
<dbReference type="PRINTS" id="PR00985">
    <property type="entry name" value="TRNASYNTHLEU"/>
</dbReference>
<dbReference type="SUPFAM" id="SSF47323">
    <property type="entry name" value="Anticodon-binding domain of a subclass of class I aminoacyl-tRNA synthetases"/>
    <property type="match status" value="1"/>
</dbReference>
<dbReference type="SUPFAM" id="SSF52374">
    <property type="entry name" value="Nucleotidylyl transferase"/>
    <property type="match status" value="1"/>
</dbReference>
<dbReference type="SUPFAM" id="SSF50677">
    <property type="entry name" value="ValRS/IleRS/LeuRS editing domain"/>
    <property type="match status" value="1"/>
</dbReference>
<dbReference type="PROSITE" id="PS00178">
    <property type="entry name" value="AA_TRNA_LIGASE_I"/>
    <property type="match status" value="1"/>
</dbReference>
<organism>
    <name type="scientific">Shewanella baltica (strain OS185)</name>
    <dbReference type="NCBI Taxonomy" id="402882"/>
    <lineage>
        <taxon>Bacteria</taxon>
        <taxon>Pseudomonadati</taxon>
        <taxon>Pseudomonadota</taxon>
        <taxon>Gammaproteobacteria</taxon>
        <taxon>Alteromonadales</taxon>
        <taxon>Shewanellaceae</taxon>
        <taxon>Shewanella</taxon>
    </lineage>
</organism>
<comment type="catalytic activity">
    <reaction evidence="1">
        <text>tRNA(Leu) + L-leucine + ATP = L-leucyl-tRNA(Leu) + AMP + diphosphate</text>
        <dbReference type="Rhea" id="RHEA:11688"/>
        <dbReference type="Rhea" id="RHEA-COMP:9613"/>
        <dbReference type="Rhea" id="RHEA-COMP:9622"/>
        <dbReference type="ChEBI" id="CHEBI:30616"/>
        <dbReference type="ChEBI" id="CHEBI:33019"/>
        <dbReference type="ChEBI" id="CHEBI:57427"/>
        <dbReference type="ChEBI" id="CHEBI:78442"/>
        <dbReference type="ChEBI" id="CHEBI:78494"/>
        <dbReference type="ChEBI" id="CHEBI:456215"/>
        <dbReference type="EC" id="6.1.1.4"/>
    </reaction>
</comment>
<comment type="subcellular location">
    <subcellularLocation>
        <location evidence="1">Cytoplasm</location>
    </subcellularLocation>
</comment>
<comment type="similarity">
    <text evidence="1">Belongs to the class-I aminoacyl-tRNA synthetase family.</text>
</comment>
<comment type="sequence caution" evidence="2">
    <conflict type="erroneous initiation">
        <sequence resource="EMBL-CDS" id="ABS09438"/>
    </conflict>
</comment>